<protein>
    <recommendedName>
        <fullName evidence="1">Large ribosomal subunit protein uL14c</fullName>
    </recommendedName>
    <alternativeName>
        <fullName evidence="2">50S ribosomal protein L14, chloroplastic</fullName>
    </alternativeName>
</protein>
<comment type="function">
    <text evidence="1">Binds to 23S rRNA.</text>
</comment>
<comment type="subunit">
    <text evidence="1">Part of the 50S ribosomal subunit.</text>
</comment>
<comment type="subcellular location">
    <subcellularLocation>
        <location>Plastid</location>
        <location>Chloroplast</location>
    </subcellularLocation>
</comment>
<comment type="similarity">
    <text evidence="1">Belongs to the universal ribosomal protein uL14 family.</text>
</comment>
<dbReference type="EMBL" id="AP006728">
    <property type="protein sequence ID" value="BAD26815.1"/>
    <property type="molecule type" value="Genomic_DNA"/>
</dbReference>
<dbReference type="RefSeq" id="YP_052786.1">
    <property type="nucleotide sequence ID" value="NC_005973.1"/>
</dbReference>
<dbReference type="SMR" id="Q6END7"/>
<dbReference type="STRING" id="4536.Q6END7"/>
<dbReference type="GeneID" id="2885958"/>
<dbReference type="Proteomes" id="UP000006591">
    <property type="component" value="Chloroplast"/>
</dbReference>
<dbReference type="GO" id="GO:0009507">
    <property type="term" value="C:chloroplast"/>
    <property type="evidence" value="ECO:0007669"/>
    <property type="project" value="UniProtKB-SubCell"/>
</dbReference>
<dbReference type="GO" id="GO:0022625">
    <property type="term" value="C:cytosolic large ribosomal subunit"/>
    <property type="evidence" value="ECO:0007669"/>
    <property type="project" value="TreeGrafter"/>
</dbReference>
<dbReference type="GO" id="GO:0009536">
    <property type="term" value="C:plastid"/>
    <property type="evidence" value="ECO:0000305"/>
    <property type="project" value="Gramene"/>
</dbReference>
<dbReference type="GO" id="GO:0070180">
    <property type="term" value="F:large ribosomal subunit rRNA binding"/>
    <property type="evidence" value="ECO:0007669"/>
    <property type="project" value="TreeGrafter"/>
</dbReference>
<dbReference type="GO" id="GO:0003735">
    <property type="term" value="F:structural constituent of ribosome"/>
    <property type="evidence" value="ECO:0007669"/>
    <property type="project" value="InterPro"/>
</dbReference>
<dbReference type="GO" id="GO:0006412">
    <property type="term" value="P:translation"/>
    <property type="evidence" value="ECO:0007669"/>
    <property type="project" value="UniProtKB-UniRule"/>
</dbReference>
<dbReference type="CDD" id="cd00337">
    <property type="entry name" value="Ribosomal_uL14"/>
    <property type="match status" value="1"/>
</dbReference>
<dbReference type="FunFam" id="2.40.150.20:FF:000002">
    <property type="entry name" value="50S ribosomal protein L14, chloroplastic"/>
    <property type="match status" value="1"/>
</dbReference>
<dbReference type="Gene3D" id="2.40.150.20">
    <property type="entry name" value="Ribosomal protein L14"/>
    <property type="match status" value="1"/>
</dbReference>
<dbReference type="HAMAP" id="MF_01367">
    <property type="entry name" value="Ribosomal_uL14"/>
    <property type="match status" value="1"/>
</dbReference>
<dbReference type="InterPro" id="IPR000218">
    <property type="entry name" value="Ribosomal_uL14"/>
</dbReference>
<dbReference type="InterPro" id="IPR005745">
    <property type="entry name" value="Ribosomal_uL14_bac-type"/>
</dbReference>
<dbReference type="InterPro" id="IPR019972">
    <property type="entry name" value="Ribosomal_uL14_CS"/>
</dbReference>
<dbReference type="InterPro" id="IPR036853">
    <property type="entry name" value="Ribosomal_uL14_sf"/>
</dbReference>
<dbReference type="NCBIfam" id="TIGR01067">
    <property type="entry name" value="rplN_bact"/>
    <property type="match status" value="1"/>
</dbReference>
<dbReference type="PANTHER" id="PTHR11761">
    <property type="entry name" value="50S/60S RIBOSOMAL PROTEIN L14/L23"/>
    <property type="match status" value="1"/>
</dbReference>
<dbReference type="PANTHER" id="PTHR11761:SF3">
    <property type="entry name" value="LARGE RIBOSOMAL SUBUNIT PROTEIN UL14M"/>
    <property type="match status" value="1"/>
</dbReference>
<dbReference type="Pfam" id="PF00238">
    <property type="entry name" value="Ribosomal_L14"/>
    <property type="match status" value="1"/>
</dbReference>
<dbReference type="SMART" id="SM01374">
    <property type="entry name" value="Ribosomal_L14"/>
    <property type="match status" value="1"/>
</dbReference>
<dbReference type="SUPFAM" id="SSF50193">
    <property type="entry name" value="Ribosomal protein L14"/>
    <property type="match status" value="1"/>
</dbReference>
<dbReference type="PROSITE" id="PS00049">
    <property type="entry name" value="RIBOSOMAL_L14"/>
    <property type="match status" value="1"/>
</dbReference>
<proteinExistence type="inferred from homology"/>
<sequence length="123" mass="13565">MIQPQTLLNVADNSGARKLMCIRVIGAASNQRYARIGDVIVAVIKDAVPQMPLERSEVIRAVIVRTCKEFKCEDGIIIRYDDNAAVIIDQKGNPKGTRVFGAIAEELRELNFTKIVSLAPEVL</sequence>
<feature type="chain" id="PRO_0000128596" description="Large ribosomal subunit protein uL14c">
    <location>
        <begin position="1"/>
        <end position="123"/>
    </location>
</feature>
<accession>Q6END7</accession>
<reference key="1">
    <citation type="journal article" date="2004" name="Gene">
        <title>The complete nucleotide sequence of wild rice (Oryza nivara) chloroplast genome: first genome wide comparative sequence analysis of wild and cultivated rice.</title>
        <authorList>
            <person name="Masood M.S."/>
            <person name="Nishikawa T."/>
            <person name="Fukuoka S."/>
            <person name="Njenga P.K."/>
            <person name="Tsudzuki T."/>
            <person name="Kadowaki K."/>
        </authorList>
    </citation>
    <scope>NUCLEOTIDE SEQUENCE [LARGE SCALE GENOMIC DNA]</scope>
    <source>
        <strain evidence="3">cv. SL10</strain>
    </source>
</reference>
<evidence type="ECO:0000255" key="1">
    <source>
        <dbReference type="HAMAP-Rule" id="MF_01367"/>
    </source>
</evidence>
<evidence type="ECO:0000305" key="2"/>
<evidence type="ECO:0000312" key="3">
    <source>
        <dbReference type="Proteomes" id="UP000006591"/>
    </source>
</evidence>
<organism>
    <name type="scientific">Oryza nivara</name>
    <name type="common">Indian wild rice</name>
    <name type="synonym">Oryza sativa f. spontanea</name>
    <dbReference type="NCBI Taxonomy" id="4536"/>
    <lineage>
        <taxon>Eukaryota</taxon>
        <taxon>Viridiplantae</taxon>
        <taxon>Streptophyta</taxon>
        <taxon>Embryophyta</taxon>
        <taxon>Tracheophyta</taxon>
        <taxon>Spermatophyta</taxon>
        <taxon>Magnoliopsida</taxon>
        <taxon>Liliopsida</taxon>
        <taxon>Poales</taxon>
        <taxon>Poaceae</taxon>
        <taxon>BOP clade</taxon>
        <taxon>Oryzoideae</taxon>
        <taxon>Oryzeae</taxon>
        <taxon>Oryzinae</taxon>
        <taxon>Oryza</taxon>
    </lineage>
</organism>
<keyword id="KW-0150">Chloroplast</keyword>
<keyword id="KW-0934">Plastid</keyword>
<keyword id="KW-1185">Reference proteome</keyword>
<keyword id="KW-0687">Ribonucleoprotein</keyword>
<keyword id="KW-0689">Ribosomal protein</keyword>
<keyword id="KW-0694">RNA-binding</keyword>
<keyword id="KW-0699">rRNA-binding</keyword>
<gene>
    <name evidence="1" type="primary">rpl14</name>
</gene>
<geneLocation type="chloroplast"/>
<name>RK14_ORYNI</name>